<gene>
    <name type="ORF">CBG20928</name>
</gene>
<evidence type="ECO:0000255" key="1">
    <source>
        <dbReference type="HAMAP-Rule" id="MF_03057"/>
    </source>
</evidence>
<organism>
    <name type="scientific">Caenorhabditis briggsae</name>
    <dbReference type="NCBI Taxonomy" id="6238"/>
    <lineage>
        <taxon>Eukaryota</taxon>
        <taxon>Metazoa</taxon>
        <taxon>Ecdysozoa</taxon>
        <taxon>Nematoda</taxon>
        <taxon>Chromadorea</taxon>
        <taxon>Rhabditida</taxon>
        <taxon>Rhabditina</taxon>
        <taxon>Rhabditomorpha</taxon>
        <taxon>Rhabditoidea</taxon>
        <taxon>Rhabditidae</taxon>
        <taxon>Peloderinae</taxon>
        <taxon>Caenorhabditis</taxon>
    </lineage>
</organism>
<feature type="chain" id="PRO_0000383184" description="Succinate dehydrogenase assembly factor 2, mitochondrial">
    <location>
        <begin position="1"/>
        <end position="122"/>
    </location>
</feature>
<comment type="function">
    <text evidence="1">Plays an essential role in the assembly of succinate dehydrogenase (SDH), an enzyme complex (also referred to as respiratory complex II) that is a component of both the tricarboxylic acid (TCA) cycle and the mitochondrial electron transport chain, and which couples the oxidation of succinate to fumarate with the reduction of ubiquinone (coenzyme Q) to ubiquinol. Required for flavinylation (covalent attachment of FAD) of the flavoprotein subunit of the SDH catalytic dimer.</text>
</comment>
<comment type="subunit">
    <text evidence="1">Interacts with the flavoprotein subunit within the SDH catalytic dimer.</text>
</comment>
<comment type="subcellular location">
    <subcellularLocation>
        <location evidence="1">Mitochondrion matrix</location>
    </subcellularLocation>
</comment>
<comment type="miscellaneous">
    <text evidence="1">This protein may be expected to contain an N-terminal transit peptide but none has been predicted.</text>
</comment>
<comment type="similarity">
    <text evidence="1">Belongs to the SDHAF2 family.</text>
</comment>
<dbReference type="EMBL" id="HE600928">
    <property type="protein sequence ID" value="CAP37859.1"/>
    <property type="molecule type" value="Genomic_DNA"/>
</dbReference>
<dbReference type="RefSeq" id="XP_002631726.1">
    <property type="nucleotide sequence ID" value="XM_002631680.1"/>
</dbReference>
<dbReference type="SMR" id="A8XYZ2"/>
<dbReference type="FunCoup" id="A8XYZ2">
    <property type="interactions" value="2311"/>
</dbReference>
<dbReference type="STRING" id="6238.A8XYZ2"/>
<dbReference type="EnsemblMetazoa" id="CBG20928.1">
    <property type="protein sequence ID" value="CBG20928.1"/>
    <property type="gene ID" value="WBGene00039830"/>
</dbReference>
<dbReference type="GeneID" id="8573725"/>
<dbReference type="KEGG" id="cbr:CBG_20928"/>
<dbReference type="CTD" id="8573725"/>
<dbReference type="WormBase" id="CBG20928">
    <property type="protein sequence ID" value="CBP20012"/>
    <property type="gene ID" value="WBGene00039830"/>
</dbReference>
<dbReference type="eggNOG" id="KOG3326">
    <property type="taxonomic scope" value="Eukaryota"/>
</dbReference>
<dbReference type="HOGENOM" id="CLU_103054_1_0_1"/>
<dbReference type="InParanoid" id="A8XYZ2"/>
<dbReference type="OMA" id="HMEWDLF"/>
<dbReference type="OrthoDB" id="284292at2759"/>
<dbReference type="Proteomes" id="UP000008549">
    <property type="component" value="Unassembled WGS sequence"/>
</dbReference>
<dbReference type="GO" id="GO:0005759">
    <property type="term" value="C:mitochondrial matrix"/>
    <property type="evidence" value="ECO:0007669"/>
    <property type="project" value="UniProtKB-SubCell"/>
</dbReference>
<dbReference type="GO" id="GO:0005739">
    <property type="term" value="C:mitochondrion"/>
    <property type="evidence" value="ECO:0000318"/>
    <property type="project" value="GO_Central"/>
</dbReference>
<dbReference type="GO" id="GO:0006121">
    <property type="term" value="P:mitochondrial electron transport, succinate to ubiquinone"/>
    <property type="evidence" value="ECO:0000318"/>
    <property type="project" value="GO_Central"/>
</dbReference>
<dbReference type="GO" id="GO:0034553">
    <property type="term" value="P:mitochondrial respiratory chain complex II assembly"/>
    <property type="evidence" value="ECO:0000318"/>
    <property type="project" value="GO_Central"/>
</dbReference>
<dbReference type="GO" id="GO:0006099">
    <property type="term" value="P:tricarboxylic acid cycle"/>
    <property type="evidence" value="ECO:0000318"/>
    <property type="project" value="GO_Central"/>
</dbReference>
<dbReference type="FunFam" id="1.10.150.250:FF:000007">
    <property type="entry name" value="Succinate dehydrogenase assembly factor 2, mitochondrial"/>
    <property type="match status" value="1"/>
</dbReference>
<dbReference type="Gene3D" id="1.10.150.250">
    <property type="entry name" value="Flavinator of succinate dehydrogenase"/>
    <property type="match status" value="1"/>
</dbReference>
<dbReference type="HAMAP" id="MF_03057">
    <property type="entry name" value="SDHAF2"/>
    <property type="match status" value="1"/>
</dbReference>
<dbReference type="InterPro" id="IPR005631">
    <property type="entry name" value="SDH"/>
</dbReference>
<dbReference type="InterPro" id="IPR036714">
    <property type="entry name" value="SDH_sf"/>
</dbReference>
<dbReference type="InterPro" id="IPR028882">
    <property type="entry name" value="SDHAF2"/>
</dbReference>
<dbReference type="PANTHER" id="PTHR12469">
    <property type="entry name" value="PROTEIN EMI5 HOMOLOG, MITOCHONDRIAL"/>
    <property type="match status" value="1"/>
</dbReference>
<dbReference type="PANTHER" id="PTHR12469:SF2">
    <property type="entry name" value="SUCCINATE DEHYDROGENASE ASSEMBLY FACTOR 2, MITOCHONDRIAL"/>
    <property type="match status" value="1"/>
</dbReference>
<dbReference type="Pfam" id="PF03937">
    <property type="entry name" value="Sdh5"/>
    <property type="match status" value="1"/>
</dbReference>
<dbReference type="SUPFAM" id="SSF109910">
    <property type="entry name" value="YgfY-like"/>
    <property type="match status" value="1"/>
</dbReference>
<reference key="1">
    <citation type="journal article" date="2003" name="PLoS Biol.">
        <title>The genome sequence of Caenorhabditis briggsae: a platform for comparative genomics.</title>
        <authorList>
            <person name="Stein L.D."/>
            <person name="Bao Z."/>
            <person name="Blasiar D."/>
            <person name="Blumenthal T."/>
            <person name="Brent M.R."/>
            <person name="Chen N."/>
            <person name="Chinwalla A."/>
            <person name="Clarke L."/>
            <person name="Clee C."/>
            <person name="Coghlan A."/>
            <person name="Coulson A."/>
            <person name="D'Eustachio P."/>
            <person name="Fitch D.H.A."/>
            <person name="Fulton L.A."/>
            <person name="Fulton R.E."/>
            <person name="Griffiths-Jones S."/>
            <person name="Harris T.W."/>
            <person name="Hillier L.W."/>
            <person name="Kamath R."/>
            <person name="Kuwabara P.E."/>
            <person name="Mardis E.R."/>
            <person name="Marra M.A."/>
            <person name="Miner T.L."/>
            <person name="Minx P."/>
            <person name="Mullikin J.C."/>
            <person name="Plumb R.W."/>
            <person name="Rogers J."/>
            <person name="Schein J.E."/>
            <person name="Sohrmann M."/>
            <person name="Spieth J."/>
            <person name="Stajich J.E."/>
            <person name="Wei C."/>
            <person name="Willey D."/>
            <person name="Wilson R.K."/>
            <person name="Durbin R.M."/>
            <person name="Waterston R.H."/>
        </authorList>
    </citation>
    <scope>NUCLEOTIDE SEQUENCE [LARGE SCALE GENOMIC DNA]</scope>
    <source>
        <strain>AF16</strain>
    </source>
</reference>
<proteinExistence type="inferred from homology"/>
<name>SDHF2_CAEBR</name>
<accession>A8XYZ2</accession>
<keyword id="KW-0143">Chaperone</keyword>
<keyword id="KW-0496">Mitochondrion</keyword>
<keyword id="KW-1185">Reference proteome</keyword>
<sequence length="122" mass="14205">MTTLLGPITRRFLSATQIARSLTRAEVPGEQLDAKRARLLYQSKKRGILENDILLGNFAEENLKKMSEPELKAYDKLINGEHMEWDLFYYLSNKKTPPEDVEKCSVYQKVKKFVDEKRVPRS</sequence>
<protein>
    <recommendedName>
        <fullName evidence="1">Succinate dehydrogenase assembly factor 2, mitochondrial</fullName>
        <shortName evidence="1">SDH assembly factor 2</shortName>
        <shortName evidence="1">SDHAF2</shortName>
    </recommendedName>
</protein>